<reference key="1">
    <citation type="journal article" date="2004" name="Nat. Biotechnol.">
        <title>Complete sequence and comparative genome analysis of the dairy bacterium Streptococcus thermophilus.</title>
        <authorList>
            <person name="Bolotin A."/>
            <person name="Quinquis B."/>
            <person name="Renault P."/>
            <person name="Sorokin A."/>
            <person name="Ehrlich S.D."/>
            <person name="Kulakauskas S."/>
            <person name="Lapidus A."/>
            <person name="Goltsman E."/>
            <person name="Mazur M."/>
            <person name="Pusch G.D."/>
            <person name="Fonstein M."/>
            <person name="Overbeek R."/>
            <person name="Kyprides N."/>
            <person name="Purnelle B."/>
            <person name="Prozzi D."/>
            <person name="Ngui K."/>
            <person name="Masuy D."/>
            <person name="Hancy F."/>
            <person name="Burteau S."/>
            <person name="Boutry M."/>
            <person name="Delcour J."/>
            <person name="Goffeau A."/>
            <person name="Hols P."/>
        </authorList>
    </citation>
    <scope>NUCLEOTIDE SEQUENCE [LARGE SCALE GENOMIC DNA]</scope>
    <source>
        <strain>CNRZ 1066</strain>
    </source>
</reference>
<feature type="chain" id="PRO_1000065353" description="Adapter protein MecA">
    <location>
        <begin position="1"/>
        <end position="249"/>
    </location>
</feature>
<proteinExistence type="inferred from homology"/>
<gene>
    <name evidence="1" type="primary">mecA</name>
    <name type="ordered locus">str0162</name>
</gene>
<name>MECA_STRT1</name>
<organism>
    <name type="scientific">Streptococcus thermophilus (strain CNRZ 1066)</name>
    <dbReference type="NCBI Taxonomy" id="299768"/>
    <lineage>
        <taxon>Bacteria</taxon>
        <taxon>Bacillati</taxon>
        <taxon>Bacillota</taxon>
        <taxon>Bacilli</taxon>
        <taxon>Lactobacillales</taxon>
        <taxon>Streptococcaceae</taxon>
        <taxon>Streptococcus</taxon>
    </lineage>
</organism>
<protein>
    <recommendedName>
        <fullName evidence="1">Adapter protein MecA</fullName>
    </recommendedName>
</protein>
<sequence length="249" mass="29171">MEMKQINETTLKIMITMEDLEEHGMELKDFLIPQEKTEEFFYTVMDELDLPDNFKNSGMLSFRVTPRKDRVDVFVNKSDLKEALDFNDLSDMEDYSGLSPEEFLKALEDNFMDKGDIEAHHKLEEHDKTLKEVDETMTEPAKEVAEETIREDYTHYVLAFSDFDQVVTFAQGLKNVSVEGSEFYKLGDVYYMTILLYLADEPDYYANNMYARFLEYANVADRTRPYLQEHATILMEEDALPVLQATKWS</sequence>
<accession>Q5M1Q8</accession>
<dbReference type="EMBL" id="CP000024">
    <property type="protein sequence ID" value="AAV61776.1"/>
    <property type="molecule type" value="Genomic_DNA"/>
</dbReference>
<dbReference type="RefSeq" id="WP_011226806.1">
    <property type="nucleotide sequence ID" value="NC_006449.1"/>
</dbReference>
<dbReference type="SMR" id="Q5M1Q8"/>
<dbReference type="KEGG" id="stc:str0162"/>
<dbReference type="HOGENOM" id="CLU_071496_1_0_9"/>
<dbReference type="GO" id="GO:0030674">
    <property type="term" value="F:protein-macromolecule adaptor activity"/>
    <property type="evidence" value="ECO:0007669"/>
    <property type="project" value="UniProtKB-UniRule"/>
</dbReference>
<dbReference type="FunFam" id="3.30.70.1950:FF:000003">
    <property type="entry name" value="Adapter protein MecA"/>
    <property type="match status" value="1"/>
</dbReference>
<dbReference type="Gene3D" id="3.30.70.1950">
    <property type="match status" value="1"/>
</dbReference>
<dbReference type="HAMAP" id="MF_01124">
    <property type="entry name" value="MecA"/>
    <property type="match status" value="1"/>
</dbReference>
<dbReference type="InterPro" id="IPR038471">
    <property type="entry name" value="MecA_C_sf"/>
</dbReference>
<dbReference type="InterPro" id="IPR008681">
    <property type="entry name" value="Neg-reg_MecA"/>
</dbReference>
<dbReference type="NCBIfam" id="NF002643">
    <property type="entry name" value="PRK02315.1-4"/>
    <property type="match status" value="1"/>
</dbReference>
<dbReference type="PANTHER" id="PTHR39161">
    <property type="entry name" value="ADAPTER PROTEIN MECA"/>
    <property type="match status" value="1"/>
</dbReference>
<dbReference type="PANTHER" id="PTHR39161:SF1">
    <property type="entry name" value="ADAPTER PROTEIN MECA 1"/>
    <property type="match status" value="1"/>
</dbReference>
<dbReference type="Pfam" id="PF05389">
    <property type="entry name" value="MecA"/>
    <property type="match status" value="1"/>
</dbReference>
<dbReference type="PIRSF" id="PIRSF029008">
    <property type="entry name" value="MecA"/>
    <property type="match status" value="1"/>
</dbReference>
<evidence type="ECO:0000255" key="1">
    <source>
        <dbReference type="HAMAP-Rule" id="MF_01124"/>
    </source>
</evidence>
<comment type="function">
    <text evidence="1">Enables the recognition and targeting of unfolded and aggregated proteins to the ClpC protease or to other proteins involved in proteolysis.</text>
</comment>
<comment type="subunit">
    <text evidence="1">Homodimer.</text>
</comment>
<comment type="domain">
    <text>The N-terminal domain probably binds unfolded/aggregated proteins; the C-terminal domain interacts with ClpC.</text>
</comment>
<comment type="similarity">
    <text evidence="1">Belongs to the MecA family.</text>
</comment>